<proteinExistence type="inferred from homology"/>
<reference key="1">
    <citation type="journal article" date="1999" name="Biochim. Biophys. Acta">
        <title>Copper- and zinc-containing superoxide dismutase and its gene from Candida albicans.</title>
        <authorList>
            <person name="Hwang C.S."/>
            <person name="Rhie G."/>
            <person name="Kim S.T."/>
            <person name="Kim Y.R."/>
            <person name="Huh W.K."/>
            <person name="Baek Y.U."/>
            <person name="Kang S.O."/>
        </authorList>
    </citation>
    <scope>NUCLEOTIDE SEQUENCE [GENOMIC DNA]</scope>
</reference>
<evidence type="ECO:0000250" key="1">
    <source>
        <dbReference type="UniProtKB" id="P00442"/>
    </source>
</evidence>
<evidence type="ECO:0000250" key="2">
    <source>
        <dbReference type="UniProtKB" id="P00445"/>
    </source>
</evidence>
<evidence type="ECO:0000250" key="3">
    <source>
        <dbReference type="UniProtKB" id="P85978"/>
    </source>
</evidence>
<evidence type="ECO:0000305" key="4"/>
<feature type="initiator methionine" description="Removed" evidence="2">
    <location>
        <position position="1"/>
    </location>
</feature>
<feature type="chain" id="PRO_0000164112" description="Superoxide dismutase [Cu-Zn]">
    <location>
        <begin position="2"/>
        <end position="154"/>
    </location>
</feature>
<feature type="binding site" evidence="2">
    <location>
        <position position="47"/>
    </location>
    <ligand>
        <name>Cu cation</name>
        <dbReference type="ChEBI" id="CHEBI:23378"/>
        <note>catalytic</note>
    </ligand>
</feature>
<feature type="binding site" evidence="2">
    <location>
        <position position="49"/>
    </location>
    <ligand>
        <name>Cu cation</name>
        <dbReference type="ChEBI" id="CHEBI:23378"/>
        <note>catalytic</note>
    </ligand>
</feature>
<feature type="binding site" evidence="2">
    <location>
        <position position="64"/>
    </location>
    <ligand>
        <name>Cu cation</name>
        <dbReference type="ChEBI" id="CHEBI:23378"/>
        <note>catalytic</note>
    </ligand>
</feature>
<feature type="binding site" evidence="2">
    <location>
        <position position="64"/>
    </location>
    <ligand>
        <name>Zn(2+)</name>
        <dbReference type="ChEBI" id="CHEBI:29105"/>
        <note>structural</note>
    </ligand>
</feature>
<feature type="binding site" evidence="2">
    <location>
        <position position="72"/>
    </location>
    <ligand>
        <name>Zn(2+)</name>
        <dbReference type="ChEBI" id="CHEBI:29105"/>
        <note>structural</note>
    </ligand>
</feature>
<feature type="binding site" evidence="2">
    <location>
        <position position="81"/>
    </location>
    <ligand>
        <name>Zn(2+)</name>
        <dbReference type="ChEBI" id="CHEBI:29105"/>
        <note>structural</note>
    </ligand>
</feature>
<feature type="binding site" evidence="2">
    <location>
        <position position="84"/>
    </location>
    <ligand>
        <name>Zn(2+)</name>
        <dbReference type="ChEBI" id="CHEBI:29105"/>
        <note>structural</note>
    </ligand>
</feature>
<feature type="binding site" evidence="2">
    <location>
        <position position="121"/>
    </location>
    <ligand>
        <name>Cu cation</name>
        <dbReference type="ChEBI" id="CHEBI:23378"/>
        <note>catalytic</note>
    </ligand>
</feature>
<feature type="binding site" evidence="2">
    <location>
        <position position="144"/>
    </location>
    <ligand>
        <name>substrate</name>
    </ligand>
</feature>
<feature type="disulfide bond" evidence="2">
    <location>
        <begin position="58"/>
        <end position="147"/>
    </location>
</feature>
<gene>
    <name type="primary">SOD1</name>
</gene>
<name>SODC_CANAX</name>
<organism>
    <name type="scientific">Candida albicans</name>
    <name type="common">Yeast</name>
    <dbReference type="NCBI Taxonomy" id="5476"/>
    <lineage>
        <taxon>Eukaryota</taxon>
        <taxon>Fungi</taxon>
        <taxon>Dikarya</taxon>
        <taxon>Ascomycota</taxon>
        <taxon>Saccharomycotina</taxon>
        <taxon>Pichiomycetes</taxon>
        <taxon>Debaryomycetaceae</taxon>
        <taxon>Candida/Lodderomyces clade</taxon>
        <taxon>Candida</taxon>
    </lineage>
</organism>
<accession>O59924</accession>
<keyword id="KW-0049">Antioxidant</keyword>
<keyword id="KW-0186">Copper</keyword>
<keyword id="KW-0963">Cytoplasm</keyword>
<keyword id="KW-1015">Disulfide bond</keyword>
<keyword id="KW-0479">Metal-binding</keyword>
<keyword id="KW-0560">Oxidoreductase</keyword>
<keyword id="KW-0862">Zinc</keyword>
<protein>
    <recommendedName>
        <fullName>Superoxide dismutase [Cu-Zn]</fullName>
        <ecNumber evidence="3">1.15.1.1</ecNumber>
    </recommendedName>
</protein>
<comment type="function">
    <text evidence="1">Destroys radicals which are normally produced within the cells and which are toxic to biological systems.</text>
</comment>
<comment type="catalytic activity">
    <reaction evidence="3">
        <text>2 superoxide + 2 H(+) = H2O2 + O2</text>
        <dbReference type="Rhea" id="RHEA:20696"/>
        <dbReference type="ChEBI" id="CHEBI:15378"/>
        <dbReference type="ChEBI" id="CHEBI:15379"/>
        <dbReference type="ChEBI" id="CHEBI:16240"/>
        <dbReference type="ChEBI" id="CHEBI:18421"/>
        <dbReference type="EC" id="1.15.1.1"/>
    </reaction>
</comment>
<comment type="cofactor">
    <cofactor evidence="2">
        <name>Cu cation</name>
        <dbReference type="ChEBI" id="CHEBI:23378"/>
    </cofactor>
    <text evidence="2">Binds 1 copper ion per subunit.</text>
</comment>
<comment type="cofactor">
    <cofactor evidence="2">
        <name>Zn(2+)</name>
        <dbReference type="ChEBI" id="CHEBI:29105"/>
    </cofactor>
    <text evidence="2">Binds 1 zinc ion per subunit.</text>
</comment>
<comment type="subunit">
    <text evidence="3">Homodimer.</text>
</comment>
<comment type="subcellular location">
    <subcellularLocation>
        <location evidence="2">Cytoplasm</location>
    </subcellularLocation>
</comment>
<comment type="similarity">
    <text evidence="4">Belongs to the Cu-Zn superoxide dismutase family.</text>
</comment>
<sequence>MVKAVAVVRGDSKVQGTVHFEQESESAPTTISWEIEGNDPNALRGFHIHQFGDNTNGCTSAGPHFNPFGKQHGAPEDDERHVGDLGNISTDGNGVAKGTKQDLLIKLIGKDSILGRTIVVHAGTDDYGKGGFEDSKTTGHAGARPACGVIGLTQ</sequence>
<dbReference type="EC" id="1.15.1.1" evidence="3"/>
<dbReference type="EMBL" id="AF046872">
    <property type="protein sequence ID" value="AAC12872.1"/>
    <property type="molecule type" value="Genomic_DNA"/>
</dbReference>
<dbReference type="SMR" id="O59924"/>
<dbReference type="EnsemblFungi" id="C4_02320C_A-T">
    <property type="protein sequence ID" value="C4_02320C_A-T-p1"/>
    <property type="gene ID" value="C4_02320C_A"/>
</dbReference>
<dbReference type="CGD" id="CAL0000185037">
    <property type="gene designation" value="SOD1"/>
</dbReference>
<dbReference type="VEuPathDB" id="FungiDB:C4_02320C_A"/>
<dbReference type="VEuPathDB" id="FungiDB:CAWG_03562"/>
<dbReference type="OMA" id="AQRGFHI"/>
<dbReference type="PhylomeDB" id="O59924"/>
<dbReference type="PHI-base" id="PHI:271"/>
<dbReference type="GO" id="GO:0005829">
    <property type="term" value="C:cytosol"/>
    <property type="evidence" value="ECO:0000314"/>
    <property type="project" value="CGD"/>
</dbReference>
<dbReference type="GO" id="GO:0005758">
    <property type="term" value="C:mitochondrial intermembrane space"/>
    <property type="evidence" value="ECO:0000314"/>
    <property type="project" value="CGD"/>
</dbReference>
<dbReference type="GO" id="GO:0005634">
    <property type="term" value="C:nucleus"/>
    <property type="evidence" value="ECO:0007669"/>
    <property type="project" value="EnsemblFungi"/>
</dbReference>
<dbReference type="GO" id="GO:1902693">
    <property type="term" value="C:superoxide dismutase complex"/>
    <property type="evidence" value="ECO:0007669"/>
    <property type="project" value="EnsemblFungi"/>
</dbReference>
<dbReference type="GO" id="GO:0005507">
    <property type="term" value="F:copper ion binding"/>
    <property type="evidence" value="ECO:0007669"/>
    <property type="project" value="InterPro"/>
</dbReference>
<dbReference type="GO" id="GO:0016670">
    <property type="term" value="F:oxidoreductase activity, acting on a sulfur group of donors, oxygen as acceptor"/>
    <property type="evidence" value="ECO:0007669"/>
    <property type="project" value="EnsemblFungi"/>
</dbReference>
<dbReference type="GO" id="GO:0004784">
    <property type="term" value="F:superoxide dismutase activity"/>
    <property type="evidence" value="ECO:0000314"/>
    <property type="project" value="CGD"/>
</dbReference>
<dbReference type="GO" id="GO:0045454">
    <property type="term" value="P:cell redox homeostasis"/>
    <property type="evidence" value="ECO:0007669"/>
    <property type="project" value="EnsemblFungi"/>
</dbReference>
<dbReference type="GO" id="GO:0034599">
    <property type="term" value="P:cellular response to oxidative stress"/>
    <property type="evidence" value="ECO:0000315"/>
    <property type="project" value="CGD"/>
</dbReference>
<dbReference type="GO" id="GO:0006825">
    <property type="term" value="P:copper ion transport"/>
    <property type="evidence" value="ECO:0007669"/>
    <property type="project" value="EnsemblFungi"/>
</dbReference>
<dbReference type="GO" id="GO:0030447">
    <property type="term" value="P:filamentous growth"/>
    <property type="evidence" value="ECO:0000315"/>
    <property type="project" value="CGD"/>
</dbReference>
<dbReference type="GO" id="GO:0036170">
    <property type="term" value="P:filamentous growth of a population of unicellular organisms in response to starvation"/>
    <property type="evidence" value="ECO:0000315"/>
    <property type="project" value="CGD"/>
</dbReference>
<dbReference type="GO" id="GO:0031505">
    <property type="term" value="P:fungal-type cell wall organization"/>
    <property type="evidence" value="ECO:0007669"/>
    <property type="project" value="EnsemblFungi"/>
</dbReference>
<dbReference type="GO" id="GO:0006878">
    <property type="term" value="P:intracellular copper ion homeostasis"/>
    <property type="evidence" value="ECO:0007669"/>
    <property type="project" value="EnsemblFungi"/>
</dbReference>
<dbReference type="GO" id="GO:0006882">
    <property type="term" value="P:intracellular zinc ion homeostasis"/>
    <property type="evidence" value="ECO:0007669"/>
    <property type="project" value="EnsemblFungi"/>
</dbReference>
<dbReference type="GO" id="GO:1901856">
    <property type="term" value="P:negative regulation of cellular respiration"/>
    <property type="evidence" value="ECO:0007669"/>
    <property type="project" value="EnsemblFungi"/>
</dbReference>
<dbReference type="GO" id="GO:0045944">
    <property type="term" value="P:positive regulation of transcription by RNA polymerase II"/>
    <property type="evidence" value="ECO:0007669"/>
    <property type="project" value="EnsemblFungi"/>
</dbReference>
<dbReference type="GO" id="GO:0050821">
    <property type="term" value="P:protein stabilization"/>
    <property type="evidence" value="ECO:0007669"/>
    <property type="project" value="EnsemblFungi"/>
</dbReference>
<dbReference type="CDD" id="cd00305">
    <property type="entry name" value="Cu-Zn_Superoxide_Dismutase"/>
    <property type="match status" value="1"/>
</dbReference>
<dbReference type="FunFam" id="2.60.40.200:FF:000001">
    <property type="entry name" value="Superoxide dismutase [Cu-Zn]"/>
    <property type="match status" value="1"/>
</dbReference>
<dbReference type="Gene3D" id="2.60.40.200">
    <property type="entry name" value="Superoxide dismutase, copper/zinc binding domain"/>
    <property type="match status" value="1"/>
</dbReference>
<dbReference type="InterPro" id="IPR036423">
    <property type="entry name" value="SOD-like_Cu/Zn_dom_sf"/>
</dbReference>
<dbReference type="InterPro" id="IPR024134">
    <property type="entry name" value="SOD_Cu/Zn_/chaperone"/>
</dbReference>
<dbReference type="InterPro" id="IPR018152">
    <property type="entry name" value="SOD_Cu/Zn_BS"/>
</dbReference>
<dbReference type="InterPro" id="IPR001424">
    <property type="entry name" value="SOD_Cu_Zn_dom"/>
</dbReference>
<dbReference type="PANTHER" id="PTHR10003">
    <property type="entry name" value="SUPEROXIDE DISMUTASE CU-ZN -RELATED"/>
    <property type="match status" value="1"/>
</dbReference>
<dbReference type="Pfam" id="PF00080">
    <property type="entry name" value="Sod_Cu"/>
    <property type="match status" value="1"/>
</dbReference>
<dbReference type="PRINTS" id="PR00068">
    <property type="entry name" value="CUZNDISMTASE"/>
</dbReference>
<dbReference type="SUPFAM" id="SSF49329">
    <property type="entry name" value="Cu,Zn superoxide dismutase-like"/>
    <property type="match status" value="1"/>
</dbReference>
<dbReference type="PROSITE" id="PS00087">
    <property type="entry name" value="SOD_CU_ZN_1"/>
    <property type="match status" value="1"/>
</dbReference>
<dbReference type="PROSITE" id="PS00332">
    <property type="entry name" value="SOD_CU_ZN_2"/>
    <property type="match status" value="1"/>
</dbReference>